<organism>
    <name type="scientific">Chlorobium phaeovibrioides (strain DSM 265 / 1930)</name>
    <name type="common">Prosthecochloris vibrioformis (strain DSM 265)</name>
    <dbReference type="NCBI Taxonomy" id="290318"/>
    <lineage>
        <taxon>Bacteria</taxon>
        <taxon>Pseudomonadati</taxon>
        <taxon>Chlorobiota</taxon>
        <taxon>Chlorobiia</taxon>
        <taxon>Chlorobiales</taxon>
        <taxon>Chlorobiaceae</taxon>
        <taxon>Chlorobium/Pelodictyon group</taxon>
        <taxon>Chlorobium</taxon>
    </lineage>
</organism>
<protein>
    <recommendedName>
        <fullName evidence="2">ATP synthase subunit alpha</fullName>
        <ecNumber evidence="2">7.1.2.2</ecNumber>
    </recommendedName>
    <alternativeName>
        <fullName evidence="2">ATP synthase F1 sector subunit alpha</fullName>
    </alternativeName>
    <alternativeName>
        <fullName evidence="2">F-ATPase subunit alpha</fullName>
    </alternativeName>
</protein>
<reference key="1">
    <citation type="submission" date="2007-03" db="EMBL/GenBank/DDBJ databases">
        <title>Complete sequence of Prosthecochloris vibrioformis DSM 265.</title>
        <authorList>
            <consortium name="US DOE Joint Genome Institute"/>
            <person name="Copeland A."/>
            <person name="Lucas S."/>
            <person name="Lapidus A."/>
            <person name="Barry K."/>
            <person name="Detter J.C."/>
            <person name="Glavina del Rio T."/>
            <person name="Hammon N."/>
            <person name="Israni S."/>
            <person name="Pitluck S."/>
            <person name="Schmutz J."/>
            <person name="Larimer F."/>
            <person name="Land M."/>
            <person name="Hauser L."/>
            <person name="Mikhailova N."/>
            <person name="Li T."/>
            <person name="Overmann J."/>
            <person name="Schuster S.C."/>
            <person name="Bryant D.A."/>
            <person name="Richardson P."/>
        </authorList>
    </citation>
    <scope>NUCLEOTIDE SEQUENCE [LARGE SCALE GENOMIC DNA]</scope>
    <source>
        <strain>DSM 265 / 1930</strain>
    </source>
</reference>
<proteinExistence type="inferred from homology"/>
<accession>A4SGM9</accession>
<feature type="chain" id="PRO_1000086887" description="ATP synthase subunit alpha">
    <location>
        <begin position="1"/>
        <end position="526"/>
    </location>
</feature>
<feature type="binding site" evidence="2">
    <location>
        <begin position="171"/>
        <end position="178"/>
    </location>
    <ligand>
        <name>ATP</name>
        <dbReference type="ChEBI" id="CHEBI:30616"/>
    </ligand>
</feature>
<feature type="site" description="Required for activity" evidence="2">
    <location>
        <position position="382"/>
    </location>
</feature>
<dbReference type="EC" id="7.1.2.2" evidence="2"/>
<dbReference type="EMBL" id="CP000607">
    <property type="protein sequence ID" value="ABP37638.1"/>
    <property type="molecule type" value="Genomic_DNA"/>
</dbReference>
<dbReference type="SMR" id="A4SGM9"/>
<dbReference type="STRING" id="290318.Cvib_1628"/>
<dbReference type="KEGG" id="pvi:Cvib_1628"/>
<dbReference type="eggNOG" id="COG0056">
    <property type="taxonomic scope" value="Bacteria"/>
</dbReference>
<dbReference type="HOGENOM" id="CLU_010091_2_1_10"/>
<dbReference type="OrthoDB" id="9803053at2"/>
<dbReference type="GO" id="GO:0005886">
    <property type="term" value="C:plasma membrane"/>
    <property type="evidence" value="ECO:0007669"/>
    <property type="project" value="UniProtKB-SubCell"/>
</dbReference>
<dbReference type="GO" id="GO:0045259">
    <property type="term" value="C:proton-transporting ATP synthase complex"/>
    <property type="evidence" value="ECO:0007669"/>
    <property type="project" value="UniProtKB-KW"/>
</dbReference>
<dbReference type="GO" id="GO:0043531">
    <property type="term" value="F:ADP binding"/>
    <property type="evidence" value="ECO:0007669"/>
    <property type="project" value="TreeGrafter"/>
</dbReference>
<dbReference type="GO" id="GO:0005524">
    <property type="term" value="F:ATP binding"/>
    <property type="evidence" value="ECO:0007669"/>
    <property type="project" value="UniProtKB-UniRule"/>
</dbReference>
<dbReference type="GO" id="GO:0046933">
    <property type="term" value="F:proton-transporting ATP synthase activity, rotational mechanism"/>
    <property type="evidence" value="ECO:0007669"/>
    <property type="project" value="UniProtKB-UniRule"/>
</dbReference>
<dbReference type="CDD" id="cd18113">
    <property type="entry name" value="ATP-synt_F1_alpha_C"/>
    <property type="match status" value="1"/>
</dbReference>
<dbReference type="CDD" id="cd18116">
    <property type="entry name" value="ATP-synt_F1_alpha_N"/>
    <property type="match status" value="1"/>
</dbReference>
<dbReference type="CDD" id="cd01132">
    <property type="entry name" value="F1-ATPase_alpha_CD"/>
    <property type="match status" value="1"/>
</dbReference>
<dbReference type="FunFam" id="1.20.150.20:FF:000001">
    <property type="entry name" value="ATP synthase subunit alpha"/>
    <property type="match status" value="1"/>
</dbReference>
<dbReference type="FunFam" id="2.40.30.20:FF:000001">
    <property type="entry name" value="ATP synthase subunit alpha"/>
    <property type="match status" value="1"/>
</dbReference>
<dbReference type="FunFam" id="3.40.50.300:FF:000002">
    <property type="entry name" value="ATP synthase subunit alpha"/>
    <property type="match status" value="1"/>
</dbReference>
<dbReference type="Gene3D" id="2.40.30.20">
    <property type="match status" value="1"/>
</dbReference>
<dbReference type="Gene3D" id="1.20.150.20">
    <property type="entry name" value="ATP synthase alpha/beta chain, C-terminal domain"/>
    <property type="match status" value="1"/>
</dbReference>
<dbReference type="Gene3D" id="3.40.50.300">
    <property type="entry name" value="P-loop containing nucleotide triphosphate hydrolases"/>
    <property type="match status" value="1"/>
</dbReference>
<dbReference type="HAMAP" id="MF_01346">
    <property type="entry name" value="ATP_synth_alpha_bact"/>
    <property type="match status" value="1"/>
</dbReference>
<dbReference type="InterPro" id="IPR023366">
    <property type="entry name" value="ATP_synth_asu-like_sf"/>
</dbReference>
<dbReference type="InterPro" id="IPR000793">
    <property type="entry name" value="ATP_synth_asu_C"/>
</dbReference>
<dbReference type="InterPro" id="IPR038376">
    <property type="entry name" value="ATP_synth_asu_C_sf"/>
</dbReference>
<dbReference type="InterPro" id="IPR033732">
    <property type="entry name" value="ATP_synth_F1_a_nt-bd_dom"/>
</dbReference>
<dbReference type="InterPro" id="IPR005294">
    <property type="entry name" value="ATP_synth_F1_asu"/>
</dbReference>
<dbReference type="InterPro" id="IPR020003">
    <property type="entry name" value="ATPase_a/bsu_AS"/>
</dbReference>
<dbReference type="InterPro" id="IPR004100">
    <property type="entry name" value="ATPase_F1/V1/A1_a/bsu_N"/>
</dbReference>
<dbReference type="InterPro" id="IPR036121">
    <property type="entry name" value="ATPase_F1/V1/A1_a/bsu_N_sf"/>
</dbReference>
<dbReference type="InterPro" id="IPR000194">
    <property type="entry name" value="ATPase_F1/V1/A1_a/bsu_nucl-bd"/>
</dbReference>
<dbReference type="InterPro" id="IPR027417">
    <property type="entry name" value="P-loop_NTPase"/>
</dbReference>
<dbReference type="NCBIfam" id="TIGR00962">
    <property type="entry name" value="atpA"/>
    <property type="match status" value="1"/>
</dbReference>
<dbReference type="NCBIfam" id="NF009884">
    <property type="entry name" value="PRK13343.1"/>
    <property type="match status" value="1"/>
</dbReference>
<dbReference type="PANTHER" id="PTHR48082">
    <property type="entry name" value="ATP SYNTHASE SUBUNIT ALPHA, MITOCHONDRIAL"/>
    <property type="match status" value="1"/>
</dbReference>
<dbReference type="PANTHER" id="PTHR48082:SF2">
    <property type="entry name" value="ATP SYNTHASE SUBUNIT ALPHA, MITOCHONDRIAL"/>
    <property type="match status" value="1"/>
</dbReference>
<dbReference type="Pfam" id="PF00006">
    <property type="entry name" value="ATP-synt_ab"/>
    <property type="match status" value="1"/>
</dbReference>
<dbReference type="Pfam" id="PF00306">
    <property type="entry name" value="ATP-synt_ab_C"/>
    <property type="match status" value="1"/>
</dbReference>
<dbReference type="Pfam" id="PF02874">
    <property type="entry name" value="ATP-synt_ab_N"/>
    <property type="match status" value="1"/>
</dbReference>
<dbReference type="PIRSF" id="PIRSF039088">
    <property type="entry name" value="F_ATPase_subunit_alpha"/>
    <property type="match status" value="1"/>
</dbReference>
<dbReference type="SUPFAM" id="SSF47917">
    <property type="entry name" value="C-terminal domain of alpha and beta subunits of F1 ATP synthase"/>
    <property type="match status" value="1"/>
</dbReference>
<dbReference type="SUPFAM" id="SSF50615">
    <property type="entry name" value="N-terminal domain of alpha and beta subunits of F1 ATP synthase"/>
    <property type="match status" value="1"/>
</dbReference>
<dbReference type="SUPFAM" id="SSF52540">
    <property type="entry name" value="P-loop containing nucleoside triphosphate hydrolases"/>
    <property type="match status" value="1"/>
</dbReference>
<dbReference type="PROSITE" id="PS00152">
    <property type="entry name" value="ATPASE_ALPHA_BETA"/>
    <property type="match status" value="1"/>
</dbReference>
<sequence>MSTTVRPDEVSSILRKQLAGFESEAEVYDVGTVLQVGDGIARVYGLLKAAAGELLEFPHNIMGMVLNLEEDNVGAVMFGASNAVKEGDTVRRTGILASIPVGEAMLGRVINPLGEPIDGKGAIETSIRLPLERRAPGVIYRKSVHEPLQTGLKAIDAMIPIGRGQRELIIGDRQTGKTAVALDTIINQKGKGVYCIYVAIGLKGSTVAQVVNTLEKHGAMEYTTVISATASDPAPLQFIAPFAGAALGEYFRDTGRHALVIYDDLSKQAVAYRQLSLLLRRPPGREAYPGDVFFLHSRLLERAAKITDDIEVAKKMNDLPEALKPMVKGGGSLTALPVIETQAGDVSAYIPTNVISITDGQIFLESNLFNSGQRPAINVGISVSRVGGAAQIKAMKKVAGTLRLDLAQFRELEAFSKFGSDLDKTTKAQLDRGARLVEILKQGQYIPMPVEKQVAIIFLGTQGLLDAVAVDHIRKFEEDFLAMLELKHPEILKSIEEKGSLEPDTANGLKEAAAKFIITFNEKAKA</sequence>
<comment type="function">
    <text evidence="2">Produces ATP from ADP in the presence of a proton gradient across the membrane. The alpha chain is a regulatory subunit.</text>
</comment>
<comment type="catalytic activity">
    <reaction evidence="2">
        <text>ATP + H2O + 4 H(+)(in) = ADP + phosphate + 5 H(+)(out)</text>
        <dbReference type="Rhea" id="RHEA:57720"/>
        <dbReference type="ChEBI" id="CHEBI:15377"/>
        <dbReference type="ChEBI" id="CHEBI:15378"/>
        <dbReference type="ChEBI" id="CHEBI:30616"/>
        <dbReference type="ChEBI" id="CHEBI:43474"/>
        <dbReference type="ChEBI" id="CHEBI:456216"/>
        <dbReference type="EC" id="7.1.2.2"/>
    </reaction>
</comment>
<comment type="subunit">
    <text evidence="1">F-type ATPases have 2 components, CF(1) - the catalytic core - and CF(0) - the membrane proton channel. CF(1) has five subunits: alpha(3), beta(3), gamma(1), delta(1), epsilon(1). CF(0) has four main subunits: a(1), b(1), b'(1) and c(9-12) (By similarity).</text>
</comment>
<comment type="subcellular location">
    <subcellularLocation>
        <location evidence="2">Cell inner membrane</location>
        <topology evidence="2">Peripheral membrane protein</topology>
    </subcellularLocation>
</comment>
<comment type="similarity">
    <text evidence="2">Belongs to the ATPase alpha/beta chains family.</text>
</comment>
<name>ATPA_CHLPM</name>
<gene>
    <name evidence="2" type="primary">atpA</name>
    <name type="ordered locus">Cvib_1628</name>
</gene>
<keyword id="KW-0066">ATP synthesis</keyword>
<keyword id="KW-0067">ATP-binding</keyword>
<keyword id="KW-0997">Cell inner membrane</keyword>
<keyword id="KW-1003">Cell membrane</keyword>
<keyword id="KW-0139">CF(1)</keyword>
<keyword id="KW-0375">Hydrogen ion transport</keyword>
<keyword id="KW-0406">Ion transport</keyword>
<keyword id="KW-0472">Membrane</keyword>
<keyword id="KW-0547">Nucleotide-binding</keyword>
<keyword id="KW-1278">Translocase</keyword>
<keyword id="KW-0813">Transport</keyword>
<evidence type="ECO:0000250" key="1"/>
<evidence type="ECO:0000255" key="2">
    <source>
        <dbReference type="HAMAP-Rule" id="MF_01346"/>
    </source>
</evidence>